<organism>
    <name type="scientific">Aeropyrum pernix (strain ATCC 700893 / DSM 11879 / JCM 9820 / NBRC 100138 / K1)</name>
    <dbReference type="NCBI Taxonomy" id="272557"/>
    <lineage>
        <taxon>Archaea</taxon>
        <taxon>Thermoproteota</taxon>
        <taxon>Thermoprotei</taxon>
        <taxon>Desulfurococcales</taxon>
        <taxon>Desulfurococcaceae</taxon>
        <taxon>Aeropyrum</taxon>
    </lineage>
</organism>
<name>SURE_AERPE</name>
<evidence type="ECO:0000255" key="1">
    <source>
        <dbReference type="HAMAP-Rule" id="MF_00060"/>
    </source>
</evidence>
<dbReference type="EC" id="3.1.3.5" evidence="1"/>
<dbReference type="EMBL" id="BA000002">
    <property type="protein sequence ID" value="BAA79779.2"/>
    <property type="molecule type" value="Genomic_DNA"/>
</dbReference>
<dbReference type="PIR" id="C72672">
    <property type="entry name" value="C72672"/>
</dbReference>
<dbReference type="RefSeq" id="WP_010865985.1">
    <property type="nucleotide sequence ID" value="NC_000854.2"/>
</dbReference>
<dbReference type="SMR" id="Q9YDW8"/>
<dbReference type="STRING" id="272557.APE_0801.1"/>
<dbReference type="EnsemblBacteria" id="BAA79779">
    <property type="protein sequence ID" value="BAA79779"/>
    <property type="gene ID" value="APE_0801.1"/>
</dbReference>
<dbReference type="GeneID" id="1444909"/>
<dbReference type="KEGG" id="ape:APE_0801.1"/>
<dbReference type="PATRIC" id="fig|272557.25.peg.578"/>
<dbReference type="eggNOG" id="arCOG02303">
    <property type="taxonomic scope" value="Archaea"/>
</dbReference>
<dbReference type="Proteomes" id="UP000002518">
    <property type="component" value="Chromosome"/>
</dbReference>
<dbReference type="GO" id="GO:0005737">
    <property type="term" value="C:cytoplasm"/>
    <property type="evidence" value="ECO:0007669"/>
    <property type="project" value="UniProtKB-SubCell"/>
</dbReference>
<dbReference type="GO" id="GO:0008253">
    <property type="term" value="F:5'-nucleotidase activity"/>
    <property type="evidence" value="ECO:0007669"/>
    <property type="project" value="UniProtKB-UniRule"/>
</dbReference>
<dbReference type="GO" id="GO:0046872">
    <property type="term" value="F:metal ion binding"/>
    <property type="evidence" value="ECO:0007669"/>
    <property type="project" value="UniProtKB-UniRule"/>
</dbReference>
<dbReference type="GO" id="GO:0000166">
    <property type="term" value="F:nucleotide binding"/>
    <property type="evidence" value="ECO:0007669"/>
    <property type="project" value="UniProtKB-KW"/>
</dbReference>
<dbReference type="Gene3D" id="3.40.1210.10">
    <property type="entry name" value="Survival protein SurE-like phosphatase/nucleotidase"/>
    <property type="match status" value="1"/>
</dbReference>
<dbReference type="HAMAP" id="MF_00060">
    <property type="entry name" value="SurE"/>
    <property type="match status" value="1"/>
</dbReference>
<dbReference type="InterPro" id="IPR030048">
    <property type="entry name" value="SurE"/>
</dbReference>
<dbReference type="InterPro" id="IPR002828">
    <property type="entry name" value="SurE-like_Pase/nucleotidase"/>
</dbReference>
<dbReference type="InterPro" id="IPR036523">
    <property type="entry name" value="SurE-like_sf"/>
</dbReference>
<dbReference type="PANTHER" id="PTHR30457">
    <property type="entry name" value="5'-NUCLEOTIDASE SURE"/>
    <property type="match status" value="1"/>
</dbReference>
<dbReference type="PANTHER" id="PTHR30457:SF0">
    <property type="entry name" value="PHOSPHATASE, PUTATIVE (AFU_ORTHOLOGUE AFUA_4G01070)-RELATED"/>
    <property type="match status" value="1"/>
</dbReference>
<dbReference type="Pfam" id="PF01975">
    <property type="entry name" value="SurE"/>
    <property type="match status" value="1"/>
</dbReference>
<dbReference type="SUPFAM" id="SSF64167">
    <property type="entry name" value="SurE-like"/>
    <property type="match status" value="1"/>
</dbReference>
<feature type="chain" id="PRO_0000111860" description="5'-nucleotidase SurE">
    <location>
        <begin position="1"/>
        <end position="267"/>
    </location>
</feature>
<feature type="binding site" evidence="1">
    <location>
        <position position="9"/>
    </location>
    <ligand>
        <name>a divalent metal cation</name>
        <dbReference type="ChEBI" id="CHEBI:60240"/>
    </ligand>
</feature>
<feature type="binding site" evidence="1">
    <location>
        <position position="10"/>
    </location>
    <ligand>
        <name>a divalent metal cation</name>
        <dbReference type="ChEBI" id="CHEBI:60240"/>
    </ligand>
</feature>
<feature type="binding site" evidence="1">
    <location>
        <position position="41"/>
    </location>
    <ligand>
        <name>a divalent metal cation</name>
        <dbReference type="ChEBI" id="CHEBI:60240"/>
    </ligand>
</feature>
<feature type="binding site" evidence="1">
    <location>
        <position position="95"/>
    </location>
    <ligand>
        <name>a divalent metal cation</name>
        <dbReference type="ChEBI" id="CHEBI:60240"/>
    </ligand>
</feature>
<gene>
    <name evidence="1" type="primary">surE</name>
    <name type="ordered locus">APE_0801.1</name>
</gene>
<keyword id="KW-0963">Cytoplasm</keyword>
<keyword id="KW-0378">Hydrolase</keyword>
<keyword id="KW-0479">Metal-binding</keyword>
<keyword id="KW-0547">Nucleotide-binding</keyword>
<keyword id="KW-1185">Reference proteome</keyword>
<accession>Q9YDW8</accession>
<comment type="function">
    <text evidence="1">Nucleotidase that shows phosphatase activity on nucleoside 5'-monophosphates.</text>
</comment>
<comment type="catalytic activity">
    <reaction evidence="1">
        <text>a ribonucleoside 5'-phosphate + H2O = a ribonucleoside + phosphate</text>
        <dbReference type="Rhea" id="RHEA:12484"/>
        <dbReference type="ChEBI" id="CHEBI:15377"/>
        <dbReference type="ChEBI" id="CHEBI:18254"/>
        <dbReference type="ChEBI" id="CHEBI:43474"/>
        <dbReference type="ChEBI" id="CHEBI:58043"/>
        <dbReference type="EC" id="3.1.3.5"/>
    </reaction>
</comment>
<comment type="cofactor">
    <cofactor evidence="1">
        <name>a divalent metal cation</name>
        <dbReference type="ChEBI" id="CHEBI:60240"/>
    </cofactor>
    <text evidence="1">Binds 1 divalent metal cation per subunit.</text>
</comment>
<comment type="subcellular location">
    <subcellularLocation>
        <location evidence="1">Cytoplasm</location>
    </subcellularLocation>
</comment>
<comment type="similarity">
    <text evidence="1">Belongs to the SurE nucleotidase family.</text>
</comment>
<reference key="1">
    <citation type="journal article" date="1999" name="DNA Res.">
        <title>Complete genome sequence of an aerobic hyper-thermophilic crenarchaeon, Aeropyrum pernix K1.</title>
        <authorList>
            <person name="Kawarabayasi Y."/>
            <person name="Hino Y."/>
            <person name="Horikawa H."/>
            <person name="Yamazaki S."/>
            <person name="Haikawa Y."/>
            <person name="Jin-no K."/>
            <person name="Takahashi M."/>
            <person name="Sekine M."/>
            <person name="Baba S."/>
            <person name="Ankai A."/>
            <person name="Kosugi H."/>
            <person name="Hosoyama A."/>
            <person name="Fukui S."/>
            <person name="Nagai Y."/>
            <person name="Nishijima K."/>
            <person name="Nakazawa H."/>
            <person name="Takamiya M."/>
            <person name="Masuda S."/>
            <person name="Funahashi T."/>
            <person name="Tanaka T."/>
            <person name="Kudoh Y."/>
            <person name="Yamazaki J."/>
            <person name="Kushida N."/>
            <person name="Oguchi A."/>
            <person name="Aoki K."/>
            <person name="Kubota K."/>
            <person name="Nakamura Y."/>
            <person name="Nomura N."/>
            <person name="Sako Y."/>
            <person name="Kikuchi H."/>
        </authorList>
    </citation>
    <scope>NUCLEOTIDE SEQUENCE [LARGE SCALE GENOMIC DNA]</scope>
    <source>
        <strain>ATCC 700893 / DSM 11879 / JCM 9820 / NBRC 100138 / K1</strain>
    </source>
</reference>
<proteinExistence type="inferred from homology"/>
<sequence>MLKAIVTNDDGVHSRSLRALAESLASRGWDVVVAAPLGNWSGYSKSIGRFRGNRVYRFESRGVRFFTGDMPPAALVGTAIDIAGFEPDIVVSGINYGPNLGIYDFFSSGTIGGALEAALRGFKSVSISSACREEETDCLPEALSISLAVVETSVETLSSSAGLMVVNIPRSPRGFKVTRPCRRVPRFSGEIGEEGSLLVEKFDHSRLFSSEHDSCDGRLFSMGYIPVSLYKIDNGWIHPLDPSRDGYLKAVEDILNYKIFPSAGKQF</sequence>
<protein>
    <recommendedName>
        <fullName evidence="1">5'-nucleotidase SurE</fullName>
        <ecNumber evidence="1">3.1.3.5</ecNumber>
    </recommendedName>
    <alternativeName>
        <fullName evidence="1">Nucleoside 5'-monophosphate phosphohydrolase</fullName>
    </alternativeName>
</protein>